<evidence type="ECO:0000255" key="1">
    <source>
        <dbReference type="HAMAP-Rule" id="MF_00367"/>
    </source>
</evidence>
<evidence type="ECO:0000255" key="2">
    <source>
        <dbReference type="PROSITE-ProRule" id="PRU01050"/>
    </source>
</evidence>
<evidence type="ECO:0000305" key="3"/>
<feature type="chain" id="PRO_0000179994" description="GTPase Era">
    <location>
        <begin position="1"/>
        <end position="324"/>
    </location>
</feature>
<feature type="domain" description="Era-type G" evidence="2">
    <location>
        <begin position="31"/>
        <end position="199"/>
    </location>
</feature>
<feature type="domain" description="KH type-2" evidence="1">
    <location>
        <begin position="230"/>
        <end position="306"/>
    </location>
</feature>
<feature type="region of interest" description="G1" evidence="2">
    <location>
        <begin position="39"/>
        <end position="46"/>
    </location>
</feature>
<feature type="region of interest" description="G2" evidence="2">
    <location>
        <begin position="65"/>
        <end position="69"/>
    </location>
</feature>
<feature type="region of interest" description="G3" evidence="2">
    <location>
        <begin position="86"/>
        <end position="89"/>
    </location>
</feature>
<feature type="region of interest" description="G4" evidence="2">
    <location>
        <begin position="148"/>
        <end position="151"/>
    </location>
</feature>
<feature type="region of interest" description="G5" evidence="2">
    <location>
        <begin position="178"/>
        <end position="180"/>
    </location>
</feature>
<feature type="binding site" evidence="1">
    <location>
        <begin position="39"/>
        <end position="46"/>
    </location>
    <ligand>
        <name>GTP</name>
        <dbReference type="ChEBI" id="CHEBI:37565"/>
    </ligand>
</feature>
<feature type="binding site" evidence="1">
    <location>
        <begin position="86"/>
        <end position="90"/>
    </location>
    <ligand>
        <name>GTP</name>
        <dbReference type="ChEBI" id="CHEBI:37565"/>
    </ligand>
</feature>
<feature type="binding site" evidence="1">
    <location>
        <begin position="148"/>
        <end position="151"/>
    </location>
    <ligand>
        <name>GTP</name>
        <dbReference type="ChEBI" id="CHEBI:37565"/>
    </ligand>
</feature>
<accession>Q8YYD8</accession>
<dbReference type="EMBL" id="BA000019">
    <property type="protein sequence ID" value="BAB72869.1"/>
    <property type="status" value="ALT_INIT"/>
    <property type="molecule type" value="Genomic_DNA"/>
</dbReference>
<dbReference type="PIR" id="AE1920">
    <property type="entry name" value="AE1920"/>
</dbReference>
<dbReference type="RefSeq" id="WP_044522758.1">
    <property type="nucleotide sequence ID" value="NZ_RSCN01000006.1"/>
</dbReference>
<dbReference type="SMR" id="Q8YYD8"/>
<dbReference type="STRING" id="103690.gene:10492925"/>
<dbReference type="KEGG" id="ana:alr0912"/>
<dbReference type="eggNOG" id="COG1159">
    <property type="taxonomic scope" value="Bacteria"/>
</dbReference>
<dbReference type="OrthoDB" id="9805918at2"/>
<dbReference type="Proteomes" id="UP000002483">
    <property type="component" value="Chromosome"/>
</dbReference>
<dbReference type="GO" id="GO:0005829">
    <property type="term" value="C:cytosol"/>
    <property type="evidence" value="ECO:0007669"/>
    <property type="project" value="TreeGrafter"/>
</dbReference>
<dbReference type="GO" id="GO:0005886">
    <property type="term" value="C:plasma membrane"/>
    <property type="evidence" value="ECO:0007669"/>
    <property type="project" value="UniProtKB-SubCell"/>
</dbReference>
<dbReference type="GO" id="GO:0005525">
    <property type="term" value="F:GTP binding"/>
    <property type="evidence" value="ECO:0007669"/>
    <property type="project" value="UniProtKB-UniRule"/>
</dbReference>
<dbReference type="GO" id="GO:0003924">
    <property type="term" value="F:GTPase activity"/>
    <property type="evidence" value="ECO:0007669"/>
    <property type="project" value="UniProtKB-UniRule"/>
</dbReference>
<dbReference type="GO" id="GO:0043024">
    <property type="term" value="F:ribosomal small subunit binding"/>
    <property type="evidence" value="ECO:0007669"/>
    <property type="project" value="TreeGrafter"/>
</dbReference>
<dbReference type="GO" id="GO:0070181">
    <property type="term" value="F:small ribosomal subunit rRNA binding"/>
    <property type="evidence" value="ECO:0007669"/>
    <property type="project" value="UniProtKB-UniRule"/>
</dbReference>
<dbReference type="GO" id="GO:0000028">
    <property type="term" value="P:ribosomal small subunit assembly"/>
    <property type="evidence" value="ECO:0007669"/>
    <property type="project" value="TreeGrafter"/>
</dbReference>
<dbReference type="CDD" id="cd04163">
    <property type="entry name" value="Era"/>
    <property type="match status" value="1"/>
</dbReference>
<dbReference type="CDD" id="cd22534">
    <property type="entry name" value="KH-II_Era"/>
    <property type="match status" value="1"/>
</dbReference>
<dbReference type="FunFam" id="3.40.50.300:FF:000094">
    <property type="entry name" value="GTPase Era"/>
    <property type="match status" value="1"/>
</dbReference>
<dbReference type="Gene3D" id="3.30.300.20">
    <property type="match status" value="1"/>
</dbReference>
<dbReference type="Gene3D" id="3.40.50.300">
    <property type="entry name" value="P-loop containing nucleotide triphosphate hydrolases"/>
    <property type="match status" value="1"/>
</dbReference>
<dbReference type="HAMAP" id="MF_00367">
    <property type="entry name" value="GTPase_Era"/>
    <property type="match status" value="1"/>
</dbReference>
<dbReference type="InterPro" id="IPR030388">
    <property type="entry name" value="G_ERA_dom"/>
</dbReference>
<dbReference type="InterPro" id="IPR006073">
    <property type="entry name" value="GTP-bd"/>
</dbReference>
<dbReference type="InterPro" id="IPR005662">
    <property type="entry name" value="GTPase_Era-like"/>
</dbReference>
<dbReference type="InterPro" id="IPR015946">
    <property type="entry name" value="KH_dom-like_a/b"/>
</dbReference>
<dbReference type="InterPro" id="IPR004044">
    <property type="entry name" value="KH_dom_type_2"/>
</dbReference>
<dbReference type="InterPro" id="IPR009019">
    <property type="entry name" value="KH_sf_prok-type"/>
</dbReference>
<dbReference type="InterPro" id="IPR027417">
    <property type="entry name" value="P-loop_NTPase"/>
</dbReference>
<dbReference type="InterPro" id="IPR005225">
    <property type="entry name" value="Small_GTP-bd"/>
</dbReference>
<dbReference type="NCBIfam" id="TIGR00436">
    <property type="entry name" value="era"/>
    <property type="match status" value="1"/>
</dbReference>
<dbReference type="NCBIfam" id="NF000908">
    <property type="entry name" value="PRK00089.1"/>
    <property type="match status" value="1"/>
</dbReference>
<dbReference type="NCBIfam" id="TIGR00231">
    <property type="entry name" value="small_GTP"/>
    <property type="match status" value="1"/>
</dbReference>
<dbReference type="PANTHER" id="PTHR42698">
    <property type="entry name" value="GTPASE ERA"/>
    <property type="match status" value="1"/>
</dbReference>
<dbReference type="PANTHER" id="PTHR42698:SF1">
    <property type="entry name" value="GTPASE ERA, MITOCHONDRIAL"/>
    <property type="match status" value="1"/>
</dbReference>
<dbReference type="Pfam" id="PF07650">
    <property type="entry name" value="KH_2"/>
    <property type="match status" value="1"/>
</dbReference>
<dbReference type="Pfam" id="PF01926">
    <property type="entry name" value="MMR_HSR1"/>
    <property type="match status" value="1"/>
</dbReference>
<dbReference type="PRINTS" id="PR00326">
    <property type="entry name" value="GTP1OBG"/>
</dbReference>
<dbReference type="SUPFAM" id="SSF52540">
    <property type="entry name" value="P-loop containing nucleoside triphosphate hydrolases"/>
    <property type="match status" value="1"/>
</dbReference>
<dbReference type="SUPFAM" id="SSF54814">
    <property type="entry name" value="Prokaryotic type KH domain (KH-domain type II)"/>
    <property type="match status" value="1"/>
</dbReference>
<dbReference type="PROSITE" id="PS51713">
    <property type="entry name" value="G_ERA"/>
    <property type="match status" value="1"/>
</dbReference>
<dbReference type="PROSITE" id="PS50823">
    <property type="entry name" value="KH_TYPE_2"/>
    <property type="match status" value="1"/>
</dbReference>
<keyword id="KW-0997">Cell inner membrane</keyword>
<keyword id="KW-1003">Cell membrane</keyword>
<keyword id="KW-0963">Cytoplasm</keyword>
<keyword id="KW-0342">GTP-binding</keyword>
<keyword id="KW-0472">Membrane</keyword>
<keyword id="KW-0547">Nucleotide-binding</keyword>
<keyword id="KW-1185">Reference proteome</keyword>
<keyword id="KW-0690">Ribosome biogenesis</keyword>
<keyword id="KW-0694">RNA-binding</keyword>
<keyword id="KW-0699">rRNA-binding</keyword>
<reference key="1">
    <citation type="journal article" date="2001" name="DNA Res.">
        <title>Complete genomic sequence of the filamentous nitrogen-fixing cyanobacterium Anabaena sp. strain PCC 7120.</title>
        <authorList>
            <person name="Kaneko T."/>
            <person name="Nakamura Y."/>
            <person name="Wolk C.P."/>
            <person name="Kuritz T."/>
            <person name="Sasamoto S."/>
            <person name="Watanabe A."/>
            <person name="Iriguchi M."/>
            <person name="Ishikawa A."/>
            <person name="Kawashima K."/>
            <person name="Kimura T."/>
            <person name="Kishida Y."/>
            <person name="Kohara M."/>
            <person name="Matsumoto M."/>
            <person name="Matsuno A."/>
            <person name="Muraki A."/>
            <person name="Nakazaki N."/>
            <person name="Shimpo S."/>
            <person name="Sugimoto M."/>
            <person name="Takazawa M."/>
            <person name="Yamada M."/>
            <person name="Yasuda M."/>
            <person name="Tabata S."/>
        </authorList>
    </citation>
    <scope>NUCLEOTIDE SEQUENCE [LARGE SCALE GENOMIC DNA]</scope>
    <source>
        <strain>PCC 7120 / SAG 25.82 / UTEX 2576</strain>
    </source>
</reference>
<gene>
    <name evidence="1" type="primary">era</name>
    <name type="ordered locus">alr0912</name>
</gene>
<protein>
    <recommendedName>
        <fullName evidence="1">GTPase Era</fullName>
    </recommendedName>
</protein>
<proteinExistence type="inferred from homology"/>
<name>ERA_NOSS1</name>
<sequence>MTAELKVASIDNHISSLSGEVSIPQAPPEFKSGFIGIIGRPNVGKSTLMNQLVGQKIAITSPVAQTTRNRLRGIVTTPEAQLIFVDTPGIHKPHHQLGEVLVKNAKLAIESVDVVLFVVDGAVACGAGDRFIADLLIHSKTPVILGINKVDQQPPDSQKIDESYQQLASAYQWPTVKFSAKTGAELPQLQELLVEHLEHGPYYYPPDLVTDQPERFIMGELIREQILLLTREEVPHSVAIAIDLVEETPTITRVLATIHVERDSQKGILIGKGGSMLKSIGSAAREQIQKLIAGKVYLELFVKVQPKWRHSRVRLAELGYRVEE</sequence>
<organism>
    <name type="scientific">Nostoc sp. (strain PCC 7120 / SAG 25.82 / UTEX 2576)</name>
    <dbReference type="NCBI Taxonomy" id="103690"/>
    <lineage>
        <taxon>Bacteria</taxon>
        <taxon>Bacillati</taxon>
        <taxon>Cyanobacteriota</taxon>
        <taxon>Cyanophyceae</taxon>
        <taxon>Nostocales</taxon>
        <taxon>Nostocaceae</taxon>
        <taxon>Nostoc</taxon>
    </lineage>
</organism>
<comment type="function">
    <text evidence="1">An essential GTPase that binds both GDP and GTP, with rapid nucleotide exchange. Plays a role in 16S rRNA processing and 30S ribosomal subunit biogenesis and possibly also in cell cycle regulation and energy metabolism.</text>
</comment>
<comment type="subunit">
    <text evidence="1">Monomer.</text>
</comment>
<comment type="subcellular location">
    <subcellularLocation>
        <location>Cytoplasm</location>
    </subcellularLocation>
    <subcellularLocation>
        <location evidence="1">Cell inner membrane</location>
        <topology evidence="1">Peripheral membrane protein</topology>
    </subcellularLocation>
</comment>
<comment type="similarity">
    <text evidence="1 2">Belongs to the TRAFAC class TrmE-Era-EngA-EngB-Septin-like GTPase superfamily. Era GTPase family.</text>
</comment>
<comment type="sequence caution" evidence="3">
    <conflict type="erroneous initiation">
        <sequence resource="EMBL-CDS" id="BAB72869"/>
    </conflict>
    <text>Extended N-terminus.</text>
</comment>